<comment type="function">
    <text evidence="2 3">Catalyzes cis-trans isomerization of the C2-C3 double bond in maleate to yield fumarate.</text>
</comment>
<comment type="catalytic activity">
    <reaction evidence="2">
        <text>maleate = fumarate</text>
        <dbReference type="Rhea" id="RHEA:13169"/>
        <dbReference type="ChEBI" id="CHEBI:29806"/>
        <dbReference type="ChEBI" id="CHEBI:30780"/>
        <dbReference type="EC" id="5.2.1.1"/>
    </reaction>
</comment>
<comment type="subunit">
    <text evidence="2">Homodimer.</text>
</comment>
<comment type="miscellaneous">
    <text evidence="2">Reaction is initiated by nucleophilic attack of cysteine at the double bond, yielding a covalent succinylcysteine-like intermediate.</text>
</comment>
<comment type="similarity">
    <text evidence="2">Belongs to the maleate isomerase family.</text>
</comment>
<sequence>MAKHFRIGMIVPSSNTTMETEIPAMLQSRMKEIPEETFTFHSSRMRMMHVTKEELKKMDEESDRCAIELSDARCDVLAYACLVAIMCQGPGYHEKSEARLASLTAQNGGAAPVISSAGALIDGIRTLGAKKIALIAPYMKPLTNQVIEYITASGIEVTDSISLEIPDNLEVGRQDPMRLIEIVKNLDVSNADAVVLSACVQMPSLPAIQKVQDQLGLPVLSAATSTVYKILKSLNLKTYVPNAGSLLSGKY</sequence>
<keyword id="KW-0413">Isomerase</keyword>
<reference key="1">
    <citation type="journal article" date="2000" name="Biosci. Biotechnol. Biochem.">
        <title>Molecular analysis of maleate cis-trans isomerase from thermophilic bacteria.</title>
        <authorList>
            <person name="Hatakeyama K."/>
            <person name="Goto M."/>
            <person name="Uchida Y."/>
            <person name="Kobayashi M."/>
            <person name="Terasawa M."/>
            <person name="Yukawa H."/>
        </authorList>
    </citation>
    <scope>NUCLEOTIDE SEQUENCE [GENOMIC DNA]</scope>
    <scope>FUNCTION</scope>
    <source>
        <strain>MI-102</strain>
    </source>
</reference>
<dbReference type="EC" id="5.2.1.1" evidence="2"/>
<dbReference type="EMBL" id="AB015134">
    <property type="protein sequence ID" value="BAA77296.1"/>
    <property type="molecule type" value="Genomic_DNA"/>
</dbReference>
<dbReference type="PIR" id="JC7225">
    <property type="entry name" value="JC7225"/>
</dbReference>
<dbReference type="SMR" id="Q9WX57"/>
<dbReference type="GO" id="GO:0050076">
    <property type="term" value="F:maleate isomerase activity"/>
    <property type="evidence" value="ECO:0000250"/>
    <property type="project" value="UniProtKB"/>
</dbReference>
<dbReference type="GO" id="GO:0051289">
    <property type="term" value="P:protein homotetramerization"/>
    <property type="evidence" value="ECO:0000250"/>
    <property type="project" value="UniProtKB"/>
</dbReference>
<dbReference type="FunFam" id="3.40.50.12500:FF:000002">
    <property type="entry name" value="Maleate isomerase"/>
    <property type="match status" value="1"/>
</dbReference>
<dbReference type="Gene3D" id="3.40.50.12500">
    <property type="match status" value="1"/>
</dbReference>
<dbReference type="HAMAP" id="MF_00943">
    <property type="entry name" value="Maleate_isomerase"/>
    <property type="match status" value="1"/>
</dbReference>
<dbReference type="InterPro" id="IPR053714">
    <property type="entry name" value="Iso_Racemase_Enz_sf"/>
</dbReference>
<dbReference type="InterPro" id="IPR026286">
    <property type="entry name" value="MaiA/AMDase"/>
</dbReference>
<dbReference type="InterPro" id="IPR028615">
    <property type="entry name" value="Maleate_isomerase"/>
</dbReference>
<dbReference type="PANTHER" id="PTHR40267">
    <property type="entry name" value="BLR3294 PROTEIN"/>
    <property type="match status" value="1"/>
</dbReference>
<dbReference type="PANTHER" id="PTHR40267:SF1">
    <property type="entry name" value="BLR3294 PROTEIN"/>
    <property type="match status" value="1"/>
</dbReference>
<dbReference type="Pfam" id="PF17645">
    <property type="entry name" value="Amdase"/>
    <property type="match status" value="1"/>
</dbReference>
<dbReference type="PIRSF" id="PIRSF015736">
    <property type="entry name" value="MI"/>
    <property type="match status" value="1"/>
</dbReference>
<name>MAIA_GEOSE</name>
<protein>
    <recommendedName>
        <fullName evidence="2">Maleate isomerase</fullName>
        <ecNumber evidence="2">5.2.1.1</ecNumber>
    </recommendedName>
    <alternativeName>
        <fullName evidence="2">Maleate cis-trans isomerase</fullName>
    </alternativeName>
</protein>
<organism>
    <name type="scientific">Geobacillus stearothermophilus</name>
    <name type="common">Bacillus stearothermophilus</name>
    <dbReference type="NCBI Taxonomy" id="1422"/>
    <lineage>
        <taxon>Bacteria</taxon>
        <taxon>Bacillati</taxon>
        <taxon>Bacillota</taxon>
        <taxon>Bacilli</taxon>
        <taxon>Bacillales</taxon>
        <taxon>Anoxybacillaceae</taxon>
        <taxon>Geobacillus</taxon>
    </lineage>
</organism>
<accession>Q9WX57</accession>
<gene>
    <name evidence="2" type="primary">maiA</name>
</gene>
<proteinExistence type="inferred from homology"/>
<evidence type="ECO:0000250" key="1">
    <source>
        <dbReference type="UniProtKB" id="Q5YXQ1"/>
    </source>
</evidence>
<evidence type="ECO:0000255" key="2">
    <source>
        <dbReference type="HAMAP-Rule" id="MF_00943"/>
    </source>
</evidence>
<evidence type="ECO:0000269" key="3">
    <source>
    </source>
</evidence>
<feature type="chain" id="PRO_0000418472" description="Maleate isomerase">
    <location>
        <begin position="1"/>
        <end position="251"/>
    </location>
</feature>
<feature type="active site" description="Nucleophile" evidence="1">
    <location>
        <position position="81"/>
    </location>
</feature>
<feature type="active site" description="Proton donor" evidence="1">
    <location>
        <position position="199"/>
    </location>
</feature>
<feature type="binding site" evidence="1">
    <location>
        <position position="15"/>
    </location>
    <ligand>
        <name>substrate</name>
    </ligand>
</feature>
<feature type="binding site" evidence="1">
    <location>
        <begin position="81"/>
        <end position="83"/>
    </location>
    <ligand>
        <name>substrate</name>
    </ligand>
</feature>
<feature type="binding site" evidence="1">
    <location>
        <position position="138"/>
    </location>
    <ligand>
        <name>substrate</name>
    </ligand>
</feature>
<feature type="binding site" evidence="1">
    <location>
        <position position="168"/>
    </location>
    <ligand>
        <name>substrate</name>
    </ligand>
</feature>
<feature type="binding site" evidence="1">
    <location>
        <begin position="200"/>
        <end position="201"/>
    </location>
    <ligand>
        <name>substrate</name>
    </ligand>
</feature>
<feature type="modified residue" description="S-(2-succinyl)cysteine" evidence="1">
    <location>
        <position position="81"/>
    </location>
</feature>